<reference key="1">
    <citation type="submission" date="1998-03" db="EMBL/GenBank/DDBJ databases">
        <title>Genetic characterization of novel siderophore receptor genes involved in iron acquisition in Pseudomonas aeruginosa.</title>
        <authorList>
            <person name="Ochsner U.A."/>
            <person name="Vasil A.I."/>
            <person name="Johnson Z."/>
            <person name="Vasil M.L."/>
        </authorList>
    </citation>
    <scope>NUCLEOTIDE SEQUENCE [GENOMIC DNA]</scope>
    <source>
        <strain>ATCC 15692 / DSM 22644 / CIP 104116 / JCM 14847 / LMG 12228 / 1C / PRS 101 / PAO1</strain>
    </source>
</reference>
<reference key="2">
    <citation type="journal article" date="2000" name="Nature">
        <title>Complete genome sequence of Pseudomonas aeruginosa PAO1, an opportunistic pathogen.</title>
        <authorList>
            <person name="Stover C.K."/>
            <person name="Pham X.-Q.T."/>
            <person name="Erwin A.L."/>
            <person name="Mizoguchi S.D."/>
            <person name="Warrener P."/>
            <person name="Hickey M.J."/>
            <person name="Brinkman F.S.L."/>
            <person name="Hufnagle W.O."/>
            <person name="Kowalik D.J."/>
            <person name="Lagrou M."/>
            <person name="Garber R.L."/>
            <person name="Goltry L."/>
            <person name="Tolentino E."/>
            <person name="Westbrock-Wadman S."/>
            <person name="Yuan Y."/>
            <person name="Brody L.L."/>
            <person name="Coulter S.N."/>
            <person name="Folger K.R."/>
            <person name="Kas A."/>
            <person name="Larbig K."/>
            <person name="Lim R.M."/>
            <person name="Smith K.A."/>
            <person name="Spencer D.H."/>
            <person name="Wong G.K.-S."/>
            <person name="Wu Z."/>
            <person name="Paulsen I.T."/>
            <person name="Reizer J."/>
            <person name="Saier M.H. Jr."/>
            <person name="Hancock R.E.W."/>
            <person name="Lory S."/>
            <person name="Olson M.V."/>
        </authorList>
    </citation>
    <scope>NUCLEOTIDE SEQUENCE [LARGE SCALE GENOMIC DNA]</scope>
    <source>
        <strain>ATCC 15692 / DSM 22644 / CIP 104116 / JCM 14847 / LMG 12228 / 1C / PRS 101 / PAO1</strain>
    </source>
</reference>
<keyword id="KW-0223">Dioxygenase</keyword>
<keyword id="KW-0408">Iron</keyword>
<keyword id="KW-0479">Metal-binding</keyword>
<keyword id="KW-0560">Oxidoreductase</keyword>
<keyword id="KW-1185">Reference proteome</keyword>
<keyword id="KW-0847">Vitamin C</keyword>
<evidence type="ECO:0000250" key="1"/>
<evidence type="ECO:0000255" key="2"/>
<evidence type="ECO:0000305" key="3"/>
<comment type="cofactor">
    <cofactor evidence="1">
        <name>Fe(2+)</name>
        <dbReference type="ChEBI" id="CHEBI:29033"/>
    </cofactor>
    <text evidence="1">Binds 1 Fe(2+) ion per subunit.</text>
</comment>
<comment type="cofactor">
    <cofactor evidence="1">
        <name>L-ascorbate</name>
        <dbReference type="ChEBI" id="CHEBI:38290"/>
    </cofactor>
</comment>
<name>PIUC_PSEAE</name>
<sequence>MLLHIPAIFTAEEVSRIRAALEQAEWADGKATAGYQSAKAKHNLQLPQDHPLAREIGEAMLQRLWNHPLFMSAALPLKVFPPLFNCYTGGGSFDFHIDNAVRDVHGGRERVRTDLSSTLFFSDPEDYDGGELVIQDTYGLQQVKLPAGDLVLYPGTSLHKVNPVTRGARYASFFWTQSLVREDSQRTLLFEMDQSIQRLTRDVPDHPSLIRLTGTYHNLLRRWSEL</sequence>
<dbReference type="EC" id="1.14.11.-"/>
<dbReference type="EMBL" id="AF051690">
    <property type="protein sequence ID" value="AAC06214.1"/>
    <property type="molecule type" value="Genomic_DNA"/>
</dbReference>
<dbReference type="EMBL" id="AE004091">
    <property type="protein sequence ID" value="AAG07903.1"/>
    <property type="molecule type" value="Genomic_DNA"/>
</dbReference>
<dbReference type="PIR" id="E83081">
    <property type="entry name" value="E83081"/>
</dbReference>
<dbReference type="RefSeq" id="NP_253205.1">
    <property type="nucleotide sequence ID" value="NC_002516.2"/>
</dbReference>
<dbReference type="RefSeq" id="WP_003112849.1">
    <property type="nucleotide sequence ID" value="NZ_QZGE01000004.1"/>
</dbReference>
<dbReference type="SMR" id="Q9HVQ7"/>
<dbReference type="FunCoup" id="Q9HVQ7">
    <property type="interactions" value="3"/>
</dbReference>
<dbReference type="STRING" id="208964.PA4515"/>
<dbReference type="PaxDb" id="208964-PA4515"/>
<dbReference type="DNASU" id="881121"/>
<dbReference type="GeneID" id="881121"/>
<dbReference type="KEGG" id="pae:PA4515"/>
<dbReference type="PATRIC" id="fig|208964.12.peg.4725"/>
<dbReference type="PseudoCAP" id="PA4515"/>
<dbReference type="HOGENOM" id="CLU_106663_0_0_6"/>
<dbReference type="InParanoid" id="Q9HVQ7"/>
<dbReference type="OrthoDB" id="9812472at2"/>
<dbReference type="PhylomeDB" id="Q9HVQ7"/>
<dbReference type="BioCyc" id="PAER208964:G1FZ6-4604-MONOMER"/>
<dbReference type="Proteomes" id="UP000002438">
    <property type="component" value="Chromosome"/>
</dbReference>
<dbReference type="GO" id="GO:0016706">
    <property type="term" value="F:2-oxoglutarate-dependent dioxygenase activity"/>
    <property type="evidence" value="ECO:0007669"/>
    <property type="project" value="UniProtKB-UniRule"/>
</dbReference>
<dbReference type="GO" id="GO:0005506">
    <property type="term" value="F:iron ion binding"/>
    <property type="evidence" value="ECO:0007669"/>
    <property type="project" value="UniProtKB-UniRule"/>
</dbReference>
<dbReference type="GO" id="GO:0031418">
    <property type="term" value="F:L-ascorbic acid binding"/>
    <property type="evidence" value="ECO:0007669"/>
    <property type="project" value="UniProtKB-KW"/>
</dbReference>
<dbReference type="GO" id="GO:0071281">
    <property type="term" value="P:cellular response to iron ion"/>
    <property type="evidence" value="ECO:0000269"/>
    <property type="project" value="CollecTF"/>
</dbReference>
<dbReference type="GO" id="GO:0006974">
    <property type="term" value="P:DNA damage response"/>
    <property type="evidence" value="ECO:0000318"/>
    <property type="project" value="GO_Central"/>
</dbReference>
<dbReference type="GO" id="GO:0006879">
    <property type="term" value="P:intracellular iron ion homeostasis"/>
    <property type="evidence" value="ECO:0000318"/>
    <property type="project" value="GO_Central"/>
</dbReference>
<dbReference type="FunFam" id="2.60.120.620:FF:000006">
    <property type="entry name" value="PKHD-type hydroxylase YbiX"/>
    <property type="match status" value="1"/>
</dbReference>
<dbReference type="FunFam" id="4.10.860.20:FF:000001">
    <property type="entry name" value="PKHD-type hydroxylase YbiX"/>
    <property type="match status" value="1"/>
</dbReference>
<dbReference type="Gene3D" id="2.60.120.620">
    <property type="entry name" value="q2cbj1_9rhob like domain"/>
    <property type="match status" value="1"/>
</dbReference>
<dbReference type="Gene3D" id="4.10.860.20">
    <property type="entry name" value="Rabenosyn, Rab binding domain"/>
    <property type="match status" value="1"/>
</dbReference>
<dbReference type="HAMAP" id="MF_00657">
    <property type="entry name" value="Hydroxyl_YbiX"/>
    <property type="match status" value="1"/>
</dbReference>
<dbReference type="InterPro" id="IPR005123">
    <property type="entry name" value="Oxoglu/Fe-dep_dioxygenase_dom"/>
</dbReference>
<dbReference type="InterPro" id="IPR041097">
    <property type="entry name" value="PKHD_C"/>
</dbReference>
<dbReference type="InterPro" id="IPR023550">
    <property type="entry name" value="PKHD_hydroxylase"/>
</dbReference>
<dbReference type="InterPro" id="IPR006620">
    <property type="entry name" value="Pro_4_hyd_alph"/>
</dbReference>
<dbReference type="InterPro" id="IPR044862">
    <property type="entry name" value="Pro_4_hyd_alph_FE2OG_OXY"/>
</dbReference>
<dbReference type="NCBIfam" id="NF003974">
    <property type="entry name" value="PRK05467.1-3"/>
    <property type="match status" value="1"/>
</dbReference>
<dbReference type="NCBIfam" id="NF003975">
    <property type="entry name" value="PRK05467.1-4"/>
    <property type="match status" value="1"/>
</dbReference>
<dbReference type="PANTHER" id="PTHR41536">
    <property type="entry name" value="PKHD-TYPE HYDROXYLASE YBIX"/>
    <property type="match status" value="1"/>
</dbReference>
<dbReference type="PANTHER" id="PTHR41536:SF1">
    <property type="entry name" value="PKHD-TYPE HYDROXYLASE YBIX"/>
    <property type="match status" value="1"/>
</dbReference>
<dbReference type="Pfam" id="PF13640">
    <property type="entry name" value="2OG-FeII_Oxy_3"/>
    <property type="match status" value="1"/>
</dbReference>
<dbReference type="Pfam" id="PF18331">
    <property type="entry name" value="PKHD_C"/>
    <property type="match status" value="1"/>
</dbReference>
<dbReference type="SMART" id="SM00702">
    <property type="entry name" value="P4Hc"/>
    <property type="match status" value="1"/>
</dbReference>
<dbReference type="SUPFAM" id="SSF51197">
    <property type="entry name" value="Clavaminate synthase-like"/>
    <property type="match status" value="1"/>
</dbReference>
<dbReference type="PROSITE" id="PS51471">
    <property type="entry name" value="FE2OG_OXY"/>
    <property type="match status" value="1"/>
</dbReference>
<protein>
    <recommendedName>
        <fullName>PKHD-type hydroxylase PiuC</fullName>
        <ecNumber>1.14.11.-</ecNumber>
    </recommendedName>
    <alternativeName>
        <fullName>Iron-uptake factor PiuC</fullName>
    </alternativeName>
</protein>
<proteinExistence type="inferred from homology"/>
<feature type="chain" id="PRO_0000206680" description="PKHD-type hydroxylase PiuC">
    <location>
        <begin position="1"/>
        <end position="226"/>
    </location>
</feature>
<feature type="domain" description="Fe2OG dioxygenase">
    <location>
        <begin position="78"/>
        <end position="178"/>
    </location>
</feature>
<feature type="binding site" evidence="1">
    <location>
        <position position="96"/>
    </location>
    <ligand>
        <name>Fe cation</name>
        <dbReference type="ChEBI" id="CHEBI:24875"/>
    </ligand>
</feature>
<feature type="binding site" evidence="1">
    <location>
        <position position="98"/>
    </location>
    <ligand>
        <name>Fe cation</name>
        <dbReference type="ChEBI" id="CHEBI:24875"/>
    </ligand>
</feature>
<feature type="binding site" evidence="1">
    <location>
        <position position="159"/>
    </location>
    <ligand>
        <name>Fe cation</name>
        <dbReference type="ChEBI" id="CHEBI:24875"/>
    </ligand>
</feature>
<feature type="binding site" evidence="2">
    <location>
        <position position="169"/>
    </location>
    <ligand>
        <name>2-oxoglutarate</name>
        <dbReference type="ChEBI" id="CHEBI:16810"/>
    </ligand>
</feature>
<feature type="sequence conflict" description="In Ref. 1; AAC06214." evidence="3" ref="1">
    <original>Y</original>
    <variation>I</variation>
    <location>
        <position position="216"/>
    </location>
</feature>
<gene>
    <name type="primary">piuC</name>
    <name type="ordered locus">PA4515</name>
</gene>
<organism>
    <name type="scientific">Pseudomonas aeruginosa (strain ATCC 15692 / DSM 22644 / CIP 104116 / JCM 14847 / LMG 12228 / 1C / PRS 101 / PAO1)</name>
    <dbReference type="NCBI Taxonomy" id="208964"/>
    <lineage>
        <taxon>Bacteria</taxon>
        <taxon>Pseudomonadati</taxon>
        <taxon>Pseudomonadota</taxon>
        <taxon>Gammaproteobacteria</taxon>
        <taxon>Pseudomonadales</taxon>
        <taxon>Pseudomonadaceae</taxon>
        <taxon>Pseudomonas</taxon>
    </lineage>
</organism>
<accession>Q9HVQ7</accession>
<accession>O68589</accession>